<reference key="1">
    <citation type="submission" date="2006-08" db="EMBL/GenBank/DDBJ databases">
        <title>Complete sequence of Shewanella frigidimarina NCIMB 400.</title>
        <authorList>
            <consortium name="US DOE Joint Genome Institute"/>
            <person name="Copeland A."/>
            <person name="Lucas S."/>
            <person name="Lapidus A."/>
            <person name="Barry K."/>
            <person name="Detter J.C."/>
            <person name="Glavina del Rio T."/>
            <person name="Hammon N."/>
            <person name="Israni S."/>
            <person name="Dalin E."/>
            <person name="Tice H."/>
            <person name="Pitluck S."/>
            <person name="Fredrickson J.K."/>
            <person name="Kolker E."/>
            <person name="McCuel L.A."/>
            <person name="DiChristina T."/>
            <person name="Nealson K.H."/>
            <person name="Newman D."/>
            <person name="Tiedje J.M."/>
            <person name="Zhou J."/>
            <person name="Romine M.F."/>
            <person name="Culley D.E."/>
            <person name="Serres M."/>
            <person name="Chertkov O."/>
            <person name="Brettin T."/>
            <person name="Bruce D."/>
            <person name="Han C."/>
            <person name="Tapia R."/>
            <person name="Gilna P."/>
            <person name="Schmutz J."/>
            <person name="Larimer F."/>
            <person name="Land M."/>
            <person name="Hauser L."/>
            <person name="Kyrpides N."/>
            <person name="Mikhailova N."/>
            <person name="Richardson P."/>
        </authorList>
    </citation>
    <scope>NUCLEOTIDE SEQUENCE [LARGE SCALE GENOMIC DNA]</scope>
    <source>
        <strain>NCIMB 400</strain>
    </source>
</reference>
<feature type="chain" id="PRO_0000339586" description="ATP synthase subunit beta 1">
    <location>
        <begin position="1"/>
        <end position="463"/>
    </location>
</feature>
<feature type="binding site" evidence="1">
    <location>
        <begin position="152"/>
        <end position="159"/>
    </location>
    <ligand>
        <name>ATP</name>
        <dbReference type="ChEBI" id="CHEBI:30616"/>
    </ligand>
</feature>
<proteinExistence type="inferred from homology"/>
<name>ATPB1_SHEFN</name>
<gene>
    <name evidence="1" type="primary">atpD1</name>
    <name type="ordered locus">Sfri_4045</name>
</gene>
<keyword id="KW-0066">ATP synthesis</keyword>
<keyword id="KW-0067">ATP-binding</keyword>
<keyword id="KW-0997">Cell inner membrane</keyword>
<keyword id="KW-1003">Cell membrane</keyword>
<keyword id="KW-0139">CF(1)</keyword>
<keyword id="KW-0375">Hydrogen ion transport</keyword>
<keyword id="KW-0406">Ion transport</keyword>
<keyword id="KW-0472">Membrane</keyword>
<keyword id="KW-0547">Nucleotide-binding</keyword>
<keyword id="KW-1185">Reference proteome</keyword>
<keyword id="KW-1278">Translocase</keyword>
<keyword id="KW-0813">Transport</keyword>
<sequence>MSTGTVVQVIGAVVDVEFPQDSVPRVYDALKITGEGACNGLVLEVQQQLGGGVVRTIAMGSSDGLRRGLEVANSGSPITVPVGVATLGRIMNVLGEPIDEAGPIGEEERYVIHRAAPSYEDQSNSTELLETGIKVIDLVCPFAKGGKVGLFGGAGVGKTVNMMELINNIAKAHSGLSVFAGVGERTREGNDFYYEMEDSGVLDKVAMVYGQMNEPPGNRLRVALTGLSIAEKFRDEGRDVLLFVDNIYRYTLAGTEVSALLGRMPSAVGYQPTLAEEMGVLQERITSTKSGSITSVQAVYVPADDLTDPSPATTFAHLDATVVLSRQIASLGIYPAVDPLDSTSRQLDPQVVGQEHYDVANGVQTVLQRYKELKDIIAILGMDELSDDDKTMVFRARKIERFLSQPFFVAEVFTGSPGKYVSLKDTIRGFKGILDGEFDHIPEQAFYMVGSIDEAVEKANKKK</sequence>
<evidence type="ECO:0000255" key="1">
    <source>
        <dbReference type="HAMAP-Rule" id="MF_01347"/>
    </source>
</evidence>
<organism>
    <name type="scientific">Shewanella frigidimarina (strain NCIMB 400)</name>
    <dbReference type="NCBI Taxonomy" id="318167"/>
    <lineage>
        <taxon>Bacteria</taxon>
        <taxon>Pseudomonadati</taxon>
        <taxon>Pseudomonadota</taxon>
        <taxon>Gammaproteobacteria</taxon>
        <taxon>Alteromonadales</taxon>
        <taxon>Shewanellaceae</taxon>
        <taxon>Shewanella</taxon>
    </lineage>
</organism>
<dbReference type="EC" id="7.1.2.2" evidence="1"/>
<dbReference type="EMBL" id="CP000447">
    <property type="protein sequence ID" value="ABI73870.1"/>
    <property type="molecule type" value="Genomic_DNA"/>
</dbReference>
<dbReference type="SMR" id="Q07VU4"/>
<dbReference type="STRING" id="318167.Sfri_4045"/>
<dbReference type="KEGG" id="sfr:Sfri_4045"/>
<dbReference type="eggNOG" id="COG0055">
    <property type="taxonomic scope" value="Bacteria"/>
</dbReference>
<dbReference type="HOGENOM" id="CLU_022398_0_2_6"/>
<dbReference type="OrthoDB" id="9801639at2"/>
<dbReference type="Proteomes" id="UP000000684">
    <property type="component" value="Chromosome"/>
</dbReference>
<dbReference type="GO" id="GO:0005886">
    <property type="term" value="C:plasma membrane"/>
    <property type="evidence" value="ECO:0007669"/>
    <property type="project" value="UniProtKB-SubCell"/>
</dbReference>
<dbReference type="GO" id="GO:0045259">
    <property type="term" value="C:proton-transporting ATP synthase complex"/>
    <property type="evidence" value="ECO:0007669"/>
    <property type="project" value="UniProtKB-KW"/>
</dbReference>
<dbReference type="GO" id="GO:0005524">
    <property type="term" value="F:ATP binding"/>
    <property type="evidence" value="ECO:0007669"/>
    <property type="project" value="UniProtKB-UniRule"/>
</dbReference>
<dbReference type="GO" id="GO:0016887">
    <property type="term" value="F:ATP hydrolysis activity"/>
    <property type="evidence" value="ECO:0007669"/>
    <property type="project" value="InterPro"/>
</dbReference>
<dbReference type="GO" id="GO:0046933">
    <property type="term" value="F:proton-transporting ATP synthase activity, rotational mechanism"/>
    <property type="evidence" value="ECO:0007669"/>
    <property type="project" value="UniProtKB-UniRule"/>
</dbReference>
<dbReference type="CDD" id="cd18110">
    <property type="entry name" value="ATP-synt_F1_beta_C"/>
    <property type="match status" value="1"/>
</dbReference>
<dbReference type="CDD" id="cd18115">
    <property type="entry name" value="ATP-synt_F1_beta_N"/>
    <property type="match status" value="1"/>
</dbReference>
<dbReference type="CDD" id="cd01133">
    <property type="entry name" value="F1-ATPase_beta_CD"/>
    <property type="match status" value="1"/>
</dbReference>
<dbReference type="FunFam" id="1.10.1140.10:FF:000001">
    <property type="entry name" value="ATP synthase subunit beta"/>
    <property type="match status" value="1"/>
</dbReference>
<dbReference type="FunFam" id="2.40.10.170:FF:000003">
    <property type="entry name" value="ATP synthase subunit beta"/>
    <property type="match status" value="1"/>
</dbReference>
<dbReference type="FunFam" id="3.40.50.300:FF:000004">
    <property type="entry name" value="ATP synthase subunit beta"/>
    <property type="match status" value="1"/>
</dbReference>
<dbReference type="Gene3D" id="2.40.10.170">
    <property type="match status" value="1"/>
</dbReference>
<dbReference type="Gene3D" id="1.10.1140.10">
    <property type="entry name" value="Bovine Mitochondrial F1-atpase, Atp Synthase Beta Chain, Chain D, domain 3"/>
    <property type="match status" value="1"/>
</dbReference>
<dbReference type="Gene3D" id="3.40.50.300">
    <property type="entry name" value="P-loop containing nucleotide triphosphate hydrolases"/>
    <property type="match status" value="1"/>
</dbReference>
<dbReference type="HAMAP" id="MF_01347">
    <property type="entry name" value="ATP_synth_beta_bact"/>
    <property type="match status" value="1"/>
</dbReference>
<dbReference type="InterPro" id="IPR003593">
    <property type="entry name" value="AAA+_ATPase"/>
</dbReference>
<dbReference type="InterPro" id="IPR055190">
    <property type="entry name" value="ATP-synt_VA_C"/>
</dbReference>
<dbReference type="InterPro" id="IPR005722">
    <property type="entry name" value="ATP_synth_F1_bsu"/>
</dbReference>
<dbReference type="InterPro" id="IPR020003">
    <property type="entry name" value="ATPase_a/bsu_AS"/>
</dbReference>
<dbReference type="InterPro" id="IPR050053">
    <property type="entry name" value="ATPase_alpha/beta_chains"/>
</dbReference>
<dbReference type="InterPro" id="IPR004100">
    <property type="entry name" value="ATPase_F1/V1/A1_a/bsu_N"/>
</dbReference>
<dbReference type="InterPro" id="IPR036121">
    <property type="entry name" value="ATPase_F1/V1/A1_a/bsu_N_sf"/>
</dbReference>
<dbReference type="InterPro" id="IPR000194">
    <property type="entry name" value="ATPase_F1/V1/A1_a/bsu_nucl-bd"/>
</dbReference>
<dbReference type="InterPro" id="IPR024034">
    <property type="entry name" value="ATPase_F1/V1_b/a_C"/>
</dbReference>
<dbReference type="InterPro" id="IPR027417">
    <property type="entry name" value="P-loop_NTPase"/>
</dbReference>
<dbReference type="NCBIfam" id="TIGR01039">
    <property type="entry name" value="atpD"/>
    <property type="match status" value="1"/>
</dbReference>
<dbReference type="PANTHER" id="PTHR15184">
    <property type="entry name" value="ATP SYNTHASE"/>
    <property type="match status" value="1"/>
</dbReference>
<dbReference type="PANTHER" id="PTHR15184:SF71">
    <property type="entry name" value="ATP SYNTHASE SUBUNIT BETA, MITOCHONDRIAL"/>
    <property type="match status" value="1"/>
</dbReference>
<dbReference type="Pfam" id="PF00006">
    <property type="entry name" value="ATP-synt_ab"/>
    <property type="match status" value="1"/>
</dbReference>
<dbReference type="Pfam" id="PF02874">
    <property type="entry name" value="ATP-synt_ab_N"/>
    <property type="match status" value="1"/>
</dbReference>
<dbReference type="Pfam" id="PF22919">
    <property type="entry name" value="ATP-synt_VA_C"/>
    <property type="match status" value="1"/>
</dbReference>
<dbReference type="SMART" id="SM00382">
    <property type="entry name" value="AAA"/>
    <property type="match status" value="1"/>
</dbReference>
<dbReference type="SUPFAM" id="SSF47917">
    <property type="entry name" value="C-terminal domain of alpha and beta subunits of F1 ATP synthase"/>
    <property type="match status" value="1"/>
</dbReference>
<dbReference type="SUPFAM" id="SSF50615">
    <property type="entry name" value="N-terminal domain of alpha and beta subunits of F1 ATP synthase"/>
    <property type="match status" value="1"/>
</dbReference>
<dbReference type="SUPFAM" id="SSF52540">
    <property type="entry name" value="P-loop containing nucleoside triphosphate hydrolases"/>
    <property type="match status" value="1"/>
</dbReference>
<dbReference type="PROSITE" id="PS00152">
    <property type="entry name" value="ATPASE_ALPHA_BETA"/>
    <property type="match status" value="1"/>
</dbReference>
<comment type="function">
    <text evidence="1">Produces ATP from ADP in the presence of a proton gradient across the membrane. The catalytic sites are hosted primarily by the beta subunits.</text>
</comment>
<comment type="catalytic activity">
    <reaction evidence="1">
        <text>ATP + H2O + 4 H(+)(in) = ADP + phosphate + 5 H(+)(out)</text>
        <dbReference type="Rhea" id="RHEA:57720"/>
        <dbReference type="ChEBI" id="CHEBI:15377"/>
        <dbReference type="ChEBI" id="CHEBI:15378"/>
        <dbReference type="ChEBI" id="CHEBI:30616"/>
        <dbReference type="ChEBI" id="CHEBI:43474"/>
        <dbReference type="ChEBI" id="CHEBI:456216"/>
        <dbReference type="EC" id="7.1.2.2"/>
    </reaction>
</comment>
<comment type="subunit">
    <text evidence="1">F-type ATPases have 2 components, CF(1) - the catalytic core - and CF(0) - the membrane proton channel. CF(1) has five subunits: alpha(3), beta(3), gamma(1), delta(1), epsilon(1). CF(0) has three main subunits: a(1), b(2) and c(9-12). The alpha and beta chains form an alternating ring which encloses part of the gamma chain. CF(1) is attached to CF(0) by a central stalk formed by the gamma and epsilon chains, while a peripheral stalk is formed by the delta and b chains.</text>
</comment>
<comment type="subcellular location">
    <subcellularLocation>
        <location evidence="1">Cell inner membrane</location>
        <topology evidence="1">Peripheral membrane protein</topology>
    </subcellularLocation>
</comment>
<comment type="similarity">
    <text evidence="1">Belongs to the ATPase alpha/beta chains family.</text>
</comment>
<protein>
    <recommendedName>
        <fullName evidence="1">ATP synthase subunit beta 1</fullName>
        <ecNumber evidence="1">7.1.2.2</ecNumber>
    </recommendedName>
    <alternativeName>
        <fullName evidence="1">ATP synthase F1 sector subunit beta 1</fullName>
    </alternativeName>
    <alternativeName>
        <fullName evidence="1">F-ATPase subunit beta 1</fullName>
    </alternativeName>
</protein>
<accession>Q07VU4</accession>